<accession>B2I0I3</accession>
<gene>
    <name evidence="1" type="primary">pqqC</name>
    <name type="ordered locus">ACICU_01796</name>
</gene>
<reference key="1">
    <citation type="journal article" date="2008" name="Antimicrob. Agents Chemother.">
        <title>Whole-genome pyrosequencing of an epidemic multidrug-resistant Acinetobacter baumannii strain belonging to the European clone II group.</title>
        <authorList>
            <person name="Iacono M."/>
            <person name="Villa L."/>
            <person name="Fortini D."/>
            <person name="Bordoni R."/>
            <person name="Imperi F."/>
            <person name="Bonnal R.J."/>
            <person name="Sicheritz-Ponten T."/>
            <person name="De Bellis G."/>
            <person name="Visca P."/>
            <person name="Cassone A."/>
            <person name="Carattoli A."/>
        </authorList>
    </citation>
    <scope>NUCLEOTIDE SEQUENCE [LARGE SCALE GENOMIC DNA]</scope>
    <source>
        <strain>ACICU</strain>
    </source>
</reference>
<name>PQQC_ACIBC</name>
<proteinExistence type="inferred from homology"/>
<evidence type="ECO:0000255" key="1">
    <source>
        <dbReference type="HAMAP-Rule" id="MF_00654"/>
    </source>
</evidence>
<sequence length="252" mass="29665">MTQTPEALTTEQFKQAIIDKGQYYHIYHPFHVMMYEGKATQQQIQAWVANRYYYQINIPLKDAAIMANCPNQRVRQEWIQRMIDQDGEYPDGGGREAWLRLAEAVGLSREQVISEELVLPGVRFAVDAYVNFARRASWREAASSSLTELFAPQIHQSRLESWPQHYPWIDDKGYEYFRSRLSQARRDVEHGLTITLDSFTTHEQQQRMLEILQFKLDILWSILDALTLAYVHNEAPYHSVTQERVWHKGLFK</sequence>
<comment type="function">
    <text evidence="1">Ring cyclization and eight-electron oxidation of 3a-(2-amino-2-carboxyethyl)-4,5-dioxo-4,5,6,7,8,9-hexahydroquinoline-7,9-dicarboxylic-acid to PQQ.</text>
</comment>
<comment type="catalytic activity">
    <reaction evidence="1">
        <text>6-(2-amino-2-carboxyethyl)-7,8-dioxo-1,2,3,4,7,8-hexahydroquinoline-2,4-dicarboxylate + 3 O2 = pyrroloquinoline quinone + 2 H2O2 + 2 H2O + H(+)</text>
        <dbReference type="Rhea" id="RHEA:10692"/>
        <dbReference type="ChEBI" id="CHEBI:15377"/>
        <dbReference type="ChEBI" id="CHEBI:15378"/>
        <dbReference type="ChEBI" id="CHEBI:15379"/>
        <dbReference type="ChEBI" id="CHEBI:16240"/>
        <dbReference type="ChEBI" id="CHEBI:58442"/>
        <dbReference type="ChEBI" id="CHEBI:58778"/>
        <dbReference type="EC" id="1.3.3.11"/>
    </reaction>
</comment>
<comment type="pathway">
    <text evidence="1">Cofactor biosynthesis; pyrroloquinoline quinone biosynthesis.</text>
</comment>
<comment type="similarity">
    <text evidence="1">Belongs to the PqqC family.</text>
</comment>
<feature type="chain" id="PRO_1000131173" description="Pyrroloquinoline-quinone synthase">
    <location>
        <begin position="1"/>
        <end position="252"/>
    </location>
</feature>
<protein>
    <recommendedName>
        <fullName evidence="1">Pyrroloquinoline-quinone synthase</fullName>
        <ecNumber evidence="1">1.3.3.11</ecNumber>
    </recommendedName>
    <alternativeName>
        <fullName evidence="1">Coenzyme PQQ synthesis protein C</fullName>
    </alternativeName>
    <alternativeName>
        <fullName evidence="1">Pyrroloquinoline quinone biosynthesis protein C</fullName>
    </alternativeName>
</protein>
<dbReference type="EC" id="1.3.3.11" evidence="1"/>
<dbReference type="EMBL" id="CP000863">
    <property type="protein sequence ID" value="ACC57108.1"/>
    <property type="molecule type" value="Genomic_DNA"/>
</dbReference>
<dbReference type="RefSeq" id="WP_000195114.1">
    <property type="nucleotide sequence ID" value="NZ_CP031380.1"/>
</dbReference>
<dbReference type="SMR" id="B2I0I3"/>
<dbReference type="KEGG" id="abc:ACICU_01796"/>
<dbReference type="HOGENOM" id="CLU_080136_0_0_6"/>
<dbReference type="UniPathway" id="UPA00539"/>
<dbReference type="Proteomes" id="UP000008839">
    <property type="component" value="Chromosome"/>
</dbReference>
<dbReference type="GO" id="GO:0033732">
    <property type="term" value="F:pyrroloquinoline-quinone synthase activity"/>
    <property type="evidence" value="ECO:0007669"/>
    <property type="project" value="UniProtKB-EC"/>
</dbReference>
<dbReference type="GO" id="GO:0018189">
    <property type="term" value="P:pyrroloquinoline quinone biosynthetic process"/>
    <property type="evidence" value="ECO:0007669"/>
    <property type="project" value="UniProtKB-UniRule"/>
</dbReference>
<dbReference type="GO" id="GO:0006790">
    <property type="term" value="P:sulfur compound metabolic process"/>
    <property type="evidence" value="ECO:0007669"/>
    <property type="project" value="UniProtKB-ARBA"/>
</dbReference>
<dbReference type="Gene3D" id="1.20.910.10">
    <property type="entry name" value="Heme oxygenase-like"/>
    <property type="match status" value="1"/>
</dbReference>
<dbReference type="HAMAP" id="MF_00654">
    <property type="entry name" value="PQQ_syn_PqqC"/>
    <property type="match status" value="1"/>
</dbReference>
<dbReference type="InterPro" id="IPR016084">
    <property type="entry name" value="Haem_Oase-like_multi-hlx"/>
</dbReference>
<dbReference type="InterPro" id="IPR011845">
    <property type="entry name" value="PqqC"/>
</dbReference>
<dbReference type="InterPro" id="IPR039068">
    <property type="entry name" value="PqqC-like"/>
</dbReference>
<dbReference type="InterPro" id="IPR004305">
    <property type="entry name" value="Thiaminase-2/PQQC"/>
</dbReference>
<dbReference type="NCBIfam" id="TIGR02111">
    <property type="entry name" value="PQQ_syn_pqqC"/>
    <property type="match status" value="1"/>
</dbReference>
<dbReference type="PANTHER" id="PTHR40279:SF3">
    <property type="entry name" value="4-AMINOBENZOATE SYNTHASE"/>
    <property type="match status" value="1"/>
</dbReference>
<dbReference type="PANTHER" id="PTHR40279">
    <property type="entry name" value="PQQC-LIKE PROTEIN"/>
    <property type="match status" value="1"/>
</dbReference>
<dbReference type="Pfam" id="PF03070">
    <property type="entry name" value="TENA_THI-4"/>
    <property type="match status" value="1"/>
</dbReference>
<dbReference type="SUPFAM" id="SSF48613">
    <property type="entry name" value="Heme oxygenase-like"/>
    <property type="match status" value="1"/>
</dbReference>
<keyword id="KW-0560">Oxidoreductase</keyword>
<keyword id="KW-0884">PQQ biosynthesis</keyword>
<organism>
    <name type="scientific">Acinetobacter baumannii (strain ACICU)</name>
    <dbReference type="NCBI Taxonomy" id="405416"/>
    <lineage>
        <taxon>Bacteria</taxon>
        <taxon>Pseudomonadati</taxon>
        <taxon>Pseudomonadota</taxon>
        <taxon>Gammaproteobacteria</taxon>
        <taxon>Moraxellales</taxon>
        <taxon>Moraxellaceae</taxon>
        <taxon>Acinetobacter</taxon>
        <taxon>Acinetobacter calcoaceticus/baumannii complex</taxon>
    </lineage>
</organism>